<keyword id="KW-0153">Cholesterol metabolism</keyword>
<keyword id="KW-0325">Glycoprotein</keyword>
<keyword id="KW-0345">HDL</keyword>
<keyword id="KW-0443">Lipid metabolism</keyword>
<keyword id="KW-0445">Lipid transport</keyword>
<keyword id="KW-0449">Lipoprotein</keyword>
<keyword id="KW-0558">Oxidation</keyword>
<keyword id="KW-0564">Palmitate</keyword>
<keyword id="KW-0597">Phosphoprotein</keyword>
<keyword id="KW-0677">Repeat</keyword>
<keyword id="KW-0964">Secreted</keyword>
<keyword id="KW-0732">Signal</keyword>
<keyword id="KW-0753">Steroid metabolism</keyword>
<keyword id="KW-1207">Sterol metabolism</keyword>
<keyword id="KW-0813">Transport</keyword>
<organism>
    <name type="scientific">Mirounga angustirostris</name>
    <name type="common">Northern elephant seal</name>
    <name type="synonym">Macrorhinus angustirostris</name>
    <dbReference type="NCBI Taxonomy" id="9716"/>
    <lineage>
        <taxon>Eukaryota</taxon>
        <taxon>Metazoa</taxon>
        <taxon>Chordata</taxon>
        <taxon>Craniata</taxon>
        <taxon>Vertebrata</taxon>
        <taxon>Euteleostomi</taxon>
        <taxon>Mammalia</taxon>
        <taxon>Eutheria</taxon>
        <taxon>Laurasiatheria</taxon>
        <taxon>Carnivora</taxon>
        <taxon>Caniformia</taxon>
        <taxon>Pinnipedia</taxon>
        <taxon>Phocidae</taxon>
        <taxon>Monachinae</taxon>
        <taxon>Miroungini</taxon>
        <taxon>Mirounga</taxon>
    </lineage>
</organism>
<evidence type="ECO:0000250" key="1"/>
<evidence type="ECO:0000250" key="2">
    <source>
        <dbReference type="UniProtKB" id="G5BQH5"/>
    </source>
</evidence>
<evidence type="ECO:0000250" key="3">
    <source>
        <dbReference type="UniProtKB" id="P02647"/>
    </source>
</evidence>
<evidence type="ECO:0000250" key="4">
    <source>
        <dbReference type="UniProtKB" id="P02648"/>
    </source>
</evidence>
<evidence type="ECO:0000250" key="5">
    <source>
        <dbReference type="UniProtKB" id="P04639"/>
    </source>
</evidence>
<evidence type="ECO:0000255" key="6"/>
<evidence type="ECO:0000305" key="7"/>
<name>APOA1_MIRAN</name>
<reference key="1">
    <citation type="submission" date="2017-11" db="EMBL/GenBank/DDBJ databases">
        <authorList>
            <person name="Johnson J."/>
            <person name="Muren E."/>
            <person name="Swofford R."/>
            <person name="Turner-Maier J."/>
            <person name="Marinescu V.D."/>
            <person name="Genereux D.P."/>
            <person name="Alfoldi J."/>
            <person name="Birren B."/>
            <person name="Karlsson E.K."/>
            <person name="Lindblad-Toh K."/>
        </authorList>
    </citation>
    <scope>NUCLEOTIDE SEQUENCE [LARGE SCALE GENOMIC DNA]</scope>
</reference>
<reference key="2">
    <citation type="unpublished observations" date="2019-09">
        <authorList>
            <person name="Puppione D.L."/>
        </authorList>
    </citation>
    <scope>IDENTIFICATION</scope>
</reference>
<comment type="function">
    <text evidence="3">Participates in the reverse transport of cholesterol from tissues to the liver for excretion by promoting cholesterol efflux from tissues and by acting as a cofactor for the lecithin cholesterol acyltransferase (LCAT). As part of the SPAP complex, activates spermatozoa motility (By similarity).</text>
</comment>
<comment type="subunit">
    <text evidence="2 3 5">Homodimer (By similarity). Interacts with APOA1BP and CLU. Component of a sperm activating protein complex (SPAP), consisting of APOA1, an immunoglobulin heavy chain, an immunoglobulin light chain and albumin. Interacts with NDRG1. Interacts with SCGB3A2 (By similarity). Interacts with NAXE and YJEFN3 (By similarity).</text>
</comment>
<comment type="subcellular location">
    <subcellularLocation>
        <location evidence="3">Secreted</location>
    </subcellularLocation>
</comment>
<comment type="PTM">
    <text evidence="4">Glycosylated.</text>
</comment>
<comment type="PTM">
    <text evidence="4">Palmitoylated.</text>
</comment>
<comment type="PTM">
    <text evidence="1">Phosphorylation sites are present in the extracellular medium.</text>
</comment>
<comment type="similarity">
    <text evidence="7">Belongs to the apolipoprotein A1/A4/E family.</text>
</comment>
<protein>
    <recommendedName>
        <fullName>Apolipoprotein A-I</fullName>
        <shortName>Apo-AI</shortName>
        <shortName>ApoA-I</shortName>
    </recommendedName>
    <alternativeName>
        <fullName>Apolipoprotein A1</fullName>
    </alternativeName>
    <component>
        <recommendedName>
            <fullName>Proapolipoprotein A-I</fullName>
            <shortName>ProapoA-I</shortName>
        </recommendedName>
    </component>
    <component>
        <recommendedName>
            <fullName>Truncated apolipoprotein A-I</fullName>
        </recommendedName>
    </component>
</protein>
<proteinExistence type="inferred from homology"/>
<sequence length="266" mass="30263">MKAVVLTLAVLFLTGSQARHFWQQDEPQSPWDRVKDLATVYVDVVKDGGRDYVAQFEASALGKQLNLKLLDNWDSLSSTVAKLREQIGPVTQEFWDNLEKETEVLRQEMSKDLEEVKKKVQPYLDEFQSKWHEEVELYRQKVAPLGAELREGARQKLQELQEKLSPLAEELRDRARAHVDALRAQLAPYSEQLRERLAARLQALKEGGGAALTEYHAKASEHLSALREKAKPALEDLRQGLLPVLENFRVSLLAAVDEATKKLNSQ</sequence>
<accession>P0DTQ9</accession>
<dbReference type="EMBL" id="PITE00000000">
    <property type="status" value="NOT_ANNOTATED_CDS"/>
    <property type="molecule type" value="Genomic_DNA"/>
</dbReference>
<dbReference type="RefSeq" id="XP_045750933.1">
    <property type="nucleotide sequence ID" value="XM_045894977.3"/>
</dbReference>
<dbReference type="SMR" id="P0DTQ9"/>
<dbReference type="GeneID" id="123857784"/>
<dbReference type="GO" id="GO:0042627">
    <property type="term" value="C:chylomicron"/>
    <property type="evidence" value="ECO:0007669"/>
    <property type="project" value="TreeGrafter"/>
</dbReference>
<dbReference type="GO" id="GO:1903561">
    <property type="term" value="C:extracellular vesicle"/>
    <property type="evidence" value="ECO:0007669"/>
    <property type="project" value="TreeGrafter"/>
</dbReference>
<dbReference type="GO" id="GO:0034364">
    <property type="term" value="C:high-density lipoprotein particle"/>
    <property type="evidence" value="ECO:0007669"/>
    <property type="project" value="UniProtKB-KW"/>
</dbReference>
<dbReference type="GO" id="GO:0034362">
    <property type="term" value="C:low-density lipoprotein particle"/>
    <property type="evidence" value="ECO:0007669"/>
    <property type="project" value="TreeGrafter"/>
</dbReference>
<dbReference type="GO" id="GO:0034361">
    <property type="term" value="C:very-low-density lipoprotein particle"/>
    <property type="evidence" value="ECO:0007669"/>
    <property type="project" value="TreeGrafter"/>
</dbReference>
<dbReference type="GO" id="GO:0120020">
    <property type="term" value="F:cholesterol transfer activity"/>
    <property type="evidence" value="ECO:0007669"/>
    <property type="project" value="TreeGrafter"/>
</dbReference>
<dbReference type="GO" id="GO:0060228">
    <property type="term" value="F:phosphatidylcholine-sterol O-acyltransferase activator activity"/>
    <property type="evidence" value="ECO:0007669"/>
    <property type="project" value="TreeGrafter"/>
</dbReference>
<dbReference type="GO" id="GO:0005543">
    <property type="term" value="F:phospholipid binding"/>
    <property type="evidence" value="ECO:0007669"/>
    <property type="project" value="TreeGrafter"/>
</dbReference>
<dbReference type="GO" id="GO:0042803">
    <property type="term" value="F:protein homodimerization activity"/>
    <property type="evidence" value="ECO:0000250"/>
    <property type="project" value="UniProtKB"/>
</dbReference>
<dbReference type="GO" id="GO:0055090">
    <property type="term" value="P:acylglycerol homeostasis"/>
    <property type="evidence" value="ECO:0007669"/>
    <property type="project" value="TreeGrafter"/>
</dbReference>
<dbReference type="GO" id="GO:0033344">
    <property type="term" value="P:cholesterol efflux"/>
    <property type="evidence" value="ECO:0007669"/>
    <property type="project" value="TreeGrafter"/>
</dbReference>
<dbReference type="GO" id="GO:0008203">
    <property type="term" value="P:cholesterol metabolic process"/>
    <property type="evidence" value="ECO:0007669"/>
    <property type="project" value="UniProtKB-KW"/>
</dbReference>
<dbReference type="GO" id="GO:0042157">
    <property type="term" value="P:lipoprotein metabolic process"/>
    <property type="evidence" value="ECO:0007669"/>
    <property type="project" value="InterPro"/>
</dbReference>
<dbReference type="GO" id="GO:0033700">
    <property type="term" value="P:phospholipid efflux"/>
    <property type="evidence" value="ECO:0007669"/>
    <property type="project" value="TreeGrafter"/>
</dbReference>
<dbReference type="FunFam" id="1.20.120.20:FF:000001">
    <property type="entry name" value="Apolipoprotein A-I"/>
    <property type="match status" value="1"/>
</dbReference>
<dbReference type="FunFam" id="1.20.5.20:FF:000001">
    <property type="entry name" value="apolipoprotein A-I"/>
    <property type="match status" value="1"/>
</dbReference>
<dbReference type="Gene3D" id="1.20.5.20">
    <property type="match status" value="1"/>
</dbReference>
<dbReference type="Gene3D" id="6.10.140.380">
    <property type="match status" value="1"/>
</dbReference>
<dbReference type="Gene3D" id="1.20.120.20">
    <property type="entry name" value="Apolipoprotein"/>
    <property type="match status" value="1"/>
</dbReference>
<dbReference type="InterPro" id="IPR000074">
    <property type="entry name" value="ApoA_E"/>
</dbReference>
<dbReference type="InterPro" id="IPR050163">
    <property type="entry name" value="Apolipoprotein_A1/A4/E"/>
</dbReference>
<dbReference type="PANTHER" id="PTHR18976">
    <property type="entry name" value="APOLIPOPROTEIN"/>
    <property type="match status" value="1"/>
</dbReference>
<dbReference type="PANTHER" id="PTHR18976:SF11">
    <property type="entry name" value="APOLIPOPROTEIN A-I"/>
    <property type="match status" value="1"/>
</dbReference>
<dbReference type="Pfam" id="PF01442">
    <property type="entry name" value="Apolipoprotein"/>
    <property type="match status" value="1"/>
</dbReference>
<dbReference type="SUPFAM" id="SSF58113">
    <property type="entry name" value="Apolipoprotein A-I"/>
    <property type="match status" value="1"/>
</dbReference>
<feature type="signal peptide" evidence="6">
    <location>
        <begin position="1"/>
        <end position="18"/>
    </location>
</feature>
<feature type="chain" id="PRO_0000448508" description="Proapolipoprotein A-I">
    <location>
        <begin position="19"/>
        <end position="266"/>
    </location>
</feature>
<feature type="chain" id="PRO_0000448509" description="Apolipoprotein A-I">
    <location>
        <begin position="25"/>
        <end position="266"/>
    </location>
</feature>
<feature type="chain" id="PRO_0000448510" description="Truncated apolipoprotein A-I" evidence="3">
    <location>
        <begin position="25"/>
        <end position="265"/>
    </location>
</feature>
<feature type="repeat" description="1">
    <location>
        <begin position="67"/>
        <end position="88"/>
    </location>
</feature>
<feature type="repeat" description="2">
    <location>
        <begin position="89"/>
        <end position="110"/>
    </location>
</feature>
<feature type="repeat" description="3; half-length">
    <location>
        <begin position="111"/>
        <end position="121"/>
    </location>
</feature>
<feature type="repeat" description="4">
    <location>
        <begin position="122"/>
        <end position="143"/>
    </location>
</feature>
<feature type="repeat" description="5">
    <location>
        <begin position="144"/>
        <end position="165"/>
    </location>
</feature>
<feature type="repeat" description="6">
    <location>
        <begin position="166"/>
        <end position="187"/>
    </location>
</feature>
<feature type="repeat" description="7">
    <location>
        <begin position="188"/>
        <end position="209"/>
    </location>
</feature>
<feature type="repeat" description="8">
    <location>
        <begin position="210"/>
        <end position="231"/>
    </location>
</feature>
<feature type="repeat" description="9; half-length">
    <location>
        <begin position="232"/>
        <end position="242"/>
    </location>
</feature>
<feature type="repeat" description="10">
    <location>
        <begin position="243"/>
        <end position="266"/>
    </location>
</feature>
<feature type="region of interest" description="10 X approximate tandem repeats">
    <location>
        <begin position="67"/>
        <end position="266"/>
    </location>
</feature>
<feature type="modified residue" description="Methionine sulfoxide" evidence="3">
    <location>
        <position position="109"/>
    </location>
</feature>
<gene>
    <name type="primary">APOA1</name>
</gene>